<proteinExistence type="inferred from homology"/>
<organism>
    <name type="scientific">Frankia casuarinae (strain DSM 45818 / CECT 9043 / HFP020203 / CcI3)</name>
    <dbReference type="NCBI Taxonomy" id="106370"/>
    <lineage>
        <taxon>Bacteria</taxon>
        <taxon>Bacillati</taxon>
        <taxon>Actinomycetota</taxon>
        <taxon>Actinomycetes</taxon>
        <taxon>Frankiales</taxon>
        <taxon>Frankiaceae</taxon>
        <taxon>Frankia</taxon>
    </lineage>
</organism>
<evidence type="ECO:0000255" key="1">
    <source>
        <dbReference type="HAMAP-Rule" id="MF_00034"/>
    </source>
</evidence>
<comment type="function">
    <text evidence="1">The RuvA-RuvB-RuvC complex processes Holliday junction (HJ) DNA during genetic recombination and DNA repair. Endonuclease that resolves HJ intermediates. Cleaves cruciform DNA by making single-stranded nicks across the HJ at symmetrical positions within the homologous arms, yielding a 5'-phosphate and a 3'-hydroxyl group; requires a central core of homology in the junction. The consensus cleavage sequence is 5'-(A/T)TT(C/G)-3'. Cleavage occurs on the 3'-side of the TT dinucleotide at the point of strand exchange. HJ branch migration catalyzed by RuvA-RuvB allows RuvC to scan DNA until it finds its consensus sequence, where it cleaves and resolves the cruciform DNA.</text>
</comment>
<comment type="catalytic activity">
    <reaction evidence="1">
        <text>Endonucleolytic cleavage at a junction such as a reciprocal single-stranded crossover between two homologous DNA duplexes (Holliday junction).</text>
        <dbReference type="EC" id="3.1.21.10"/>
    </reaction>
</comment>
<comment type="cofactor">
    <cofactor evidence="1">
        <name>Mg(2+)</name>
        <dbReference type="ChEBI" id="CHEBI:18420"/>
    </cofactor>
    <text evidence="1">Binds 2 Mg(2+) ion per subunit.</text>
</comment>
<comment type="subunit">
    <text evidence="1">Homodimer which binds Holliday junction (HJ) DNA. The HJ becomes 2-fold symmetrical on binding to RuvC with unstacked arms; it has a different conformation from HJ DNA in complex with RuvA. In the full resolvosome a probable DNA-RuvA(4)-RuvB(12)-RuvC(2) complex forms which resolves the HJ.</text>
</comment>
<comment type="subcellular location">
    <subcellularLocation>
        <location evidence="1">Cytoplasm</location>
    </subcellularLocation>
</comment>
<comment type="similarity">
    <text evidence="1">Belongs to the RuvC family.</text>
</comment>
<gene>
    <name evidence="1" type="primary">ruvC</name>
    <name type="ordered locus">Francci3_1369</name>
</gene>
<name>RUVC_FRACC</name>
<reference key="1">
    <citation type="journal article" date="2007" name="Genome Res.">
        <title>Genome characteristics of facultatively symbiotic Frankia sp. strains reflect host range and host plant biogeography.</title>
        <authorList>
            <person name="Normand P."/>
            <person name="Lapierre P."/>
            <person name="Tisa L.S."/>
            <person name="Gogarten J.P."/>
            <person name="Alloisio N."/>
            <person name="Bagnarol E."/>
            <person name="Bassi C.A."/>
            <person name="Berry A.M."/>
            <person name="Bickhart D.M."/>
            <person name="Choisne N."/>
            <person name="Couloux A."/>
            <person name="Cournoyer B."/>
            <person name="Cruveiller S."/>
            <person name="Daubin V."/>
            <person name="Demange N."/>
            <person name="Francino M.P."/>
            <person name="Goltsman E."/>
            <person name="Huang Y."/>
            <person name="Kopp O.R."/>
            <person name="Labarre L."/>
            <person name="Lapidus A."/>
            <person name="Lavire C."/>
            <person name="Marechal J."/>
            <person name="Martinez M."/>
            <person name="Mastronunzio J.E."/>
            <person name="Mullin B.C."/>
            <person name="Niemann J."/>
            <person name="Pujic P."/>
            <person name="Rawnsley T."/>
            <person name="Rouy Z."/>
            <person name="Schenowitz C."/>
            <person name="Sellstedt A."/>
            <person name="Tavares F."/>
            <person name="Tomkins J.P."/>
            <person name="Vallenet D."/>
            <person name="Valverde C."/>
            <person name="Wall L.G."/>
            <person name="Wang Y."/>
            <person name="Medigue C."/>
            <person name="Benson D.R."/>
        </authorList>
    </citation>
    <scope>NUCLEOTIDE SEQUENCE [LARGE SCALE GENOMIC DNA]</scope>
    <source>
        <strain>DSM 45818 / CECT 9043 / HFP020203 / CcI3</strain>
    </source>
</reference>
<sequence length="172" mass="17761">MRVLGVDPGLTRCGLGVVDGGLGIRAHLVEVGVVRTPATAEVAERLCAVSDGIDAWLDRTRPEAVAVEKVFSQANMRTVMGTAQAGAVAIVLAARRGLPVGLYTPSEVKAAVTGSGRADKAQVSFMITRLLGLTEAPRPADAADALALALCHLWRGPALARFRSAAPGGPTR</sequence>
<feature type="chain" id="PRO_0000332420" description="Crossover junction endodeoxyribonuclease RuvC">
    <location>
        <begin position="1"/>
        <end position="172"/>
    </location>
</feature>
<feature type="active site" evidence="1">
    <location>
        <position position="7"/>
    </location>
</feature>
<feature type="active site" evidence="1">
    <location>
        <position position="68"/>
    </location>
</feature>
<feature type="active site" evidence="1">
    <location>
        <position position="141"/>
    </location>
</feature>
<feature type="binding site" evidence="1">
    <location>
        <position position="7"/>
    </location>
    <ligand>
        <name>Mg(2+)</name>
        <dbReference type="ChEBI" id="CHEBI:18420"/>
        <label>1</label>
    </ligand>
</feature>
<feature type="binding site" evidence="1">
    <location>
        <position position="68"/>
    </location>
    <ligand>
        <name>Mg(2+)</name>
        <dbReference type="ChEBI" id="CHEBI:18420"/>
        <label>2</label>
    </ligand>
</feature>
<feature type="binding site" evidence="1">
    <location>
        <position position="141"/>
    </location>
    <ligand>
        <name>Mg(2+)</name>
        <dbReference type="ChEBI" id="CHEBI:18420"/>
        <label>1</label>
    </ligand>
</feature>
<dbReference type="EC" id="3.1.21.10" evidence="1"/>
<dbReference type="EMBL" id="CP000249">
    <property type="protein sequence ID" value="ABD10746.1"/>
    <property type="molecule type" value="Genomic_DNA"/>
</dbReference>
<dbReference type="RefSeq" id="WP_011435811.1">
    <property type="nucleotide sequence ID" value="NZ_JENI01000007.1"/>
</dbReference>
<dbReference type="SMR" id="Q2JD96"/>
<dbReference type="STRING" id="106370.Francci3_1369"/>
<dbReference type="KEGG" id="fra:Francci3_1369"/>
<dbReference type="eggNOG" id="COG0817">
    <property type="taxonomic scope" value="Bacteria"/>
</dbReference>
<dbReference type="HOGENOM" id="CLU_091257_0_2_11"/>
<dbReference type="OrthoDB" id="9805499at2"/>
<dbReference type="PhylomeDB" id="Q2JD96"/>
<dbReference type="Proteomes" id="UP000001937">
    <property type="component" value="Chromosome"/>
</dbReference>
<dbReference type="GO" id="GO:0005737">
    <property type="term" value="C:cytoplasm"/>
    <property type="evidence" value="ECO:0007669"/>
    <property type="project" value="UniProtKB-SubCell"/>
</dbReference>
<dbReference type="GO" id="GO:0048476">
    <property type="term" value="C:Holliday junction resolvase complex"/>
    <property type="evidence" value="ECO:0007669"/>
    <property type="project" value="UniProtKB-UniRule"/>
</dbReference>
<dbReference type="GO" id="GO:0008821">
    <property type="term" value="F:crossover junction DNA endonuclease activity"/>
    <property type="evidence" value="ECO:0007669"/>
    <property type="project" value="UniProtKB-UniRule"/>
</dbReference>
<dbReference type="GO" id="GO:0003677">
    <property type="term" value="F:DNA binding"/>
    <property type="evidence" value="ECO:0007669"/>
    <property type="project" value="UniProtKB-KW"/>
</dbReference>
<dbReference type="GO" id="GO:0000287">
    <property type="term" value="F:magnesium ion binding"/>
    <property type="evidence" value="ECO:0007669"/>
    <property type="project" value="UniProtKB-UniRule"/>
</dbReference>
<dbReference type="GO" id="GO:0006310">
    <property type="term" value="P:DNA recombination"/>
    <property type="evidence" value="ECO:0007669"/>
    <property type="project" value="UniProtKB-UniRule"/>
</dbReference>
<dbReference type="GO" id="GO:0006281">
    <property type="term" value="P:DNA repair"/>
    <property type="evidence" value="ECO:0007669"/>
    <property type="project" value="UniProtKB-UniRule"/>
</dbReference>
<dbReference type="CDD" id="cd16962">
    <property type="entry name" value="RuvC"/>
    <property type="match status" value="1"/>
</dbReference>
<dbReference type="FunFam" id="3.30.420.10:FF:000002">
    <property type="entry name" value="Crossover junction endodeoxyribonuclease RuvC"/>
    <property type="match status" value="1"/>
</dbReference>
<dbReference type="Gene3D" id="3.30.420.10">
    <property type="entry name" value="Ribonuclease H-like superfamily/Ribonuclease H"/>
    <property type="match status" value="1"/>
</dbReference>
<dbReference type="HAMAP" id="MF_00034">
    <property type="entry name" value="RuvC"/>
    <property type="match status" value="1"/>
</dbReference>
<dbReference type="InterPro" id="IPR012337">
    <property type="entry name" value="RNaseH-like_sf"/>
</dbReference>
<dbReference type="InterPro" id="IPR036397">
    <property type="entry name" value="RNaseH_sf"/>
</dbReference>
<dbReference type="InterPro" id="IPR020563">
    <property type="entry name" value="X-over_junc_endoDNase_Mg_BS"/>
</dbReference>
<dbReference type="InterPro" id="IPR002176">
    <property type="entry name" value="X-over_junc_endoDNase_RuvC"/>
</dbReference>
<dbReference type="NCBIfam" id="TIGR00228">
    <property type="entry name" value="ruvC"/>
    <property type="match status" value="1"/>
</dbReference>
<dbReference type="PANTHER" id="PTHR30194">
    <property type="entry name" value="CROSSOVER JUNCTION ENDODEOXYRIBONUCLEASE RUVC"/>
    <property type="match status" value="1"/>
</dbReference>
<dbReference type="PANTHER" id="PTHR30194:SF3">
    <property type="entry name" value="CROSSOVER JUNCTION ENDODEOXYRIBONUCLEASE RUVC"/>
    <property type="match status" value="1"/>
</dbReference>
<dbReference type="Pfam" id="PF02075">
    <property type="entry name" value="RuvC"/>
    <property type="match status" value="1"/>
</dbReference>
<dbReference type="PRINTS" id="PR00696">
    <property type="entry name" value="RSOLVASERUVC"/>
</dbReference>
<dbReference type="SUPFAM" id="SSF53098">
    <property type="entry name" value="Ribonuclease H-like"/>
    <property type="match status" value="1"/>
</dbReference>
<dbReference type="PROSITE" id="PS01321">
    <property type="entry name" value="RUVC"/>
    <property type="match status" value="1"/>
</dbReference>
<accession>Q2JD96</accession>
<keyword id="KW-0963">Cytoplasm</keyword>
<keyword id="KW-0227">DNA damage</keyword>
<keyword id="KW-0233">DNA recombination</keyword>
<keyword id="KW-0234">DNA repair</keyword>
<keyword id="KW-0238">DNA-binding</keyword>
<keyword id="KW-0255">Endonuclease</keyword>
<keyword id="KW-0378">Hydrolase</keyword>
<keyword id="KW-0460">Magnesium</keyword>
<keyword id="KW-0479">Metal-binding</keyword>
<keyword id="KW-0540">Nuclease</keyword>
<keyword id="KW-1185">Reference proteome</keyword>
<protein>
    <recommendedName>
        <fullName evidence="1">Crossover junction endodeoxyribonuclease RuvC</fullName>
        <ecNumber evidence="1">3.1.21.10</ecNumber>
    </recommendedName>
    <alternativeName>
        <fullName evidence="1">Holliday junction nuclease RuvC</fullName>
    </alternativeName>
    <alternativeName>
        <fullName evidence="1">Holliday junction resolvase RuvC</fullName>
    </alternativeName>
</protein>